<comment type="function">
    <text evidence="4 5 6">Type II topoisomerase (PubMed:25463606, PubMed:27060564). Processively relaxes supercoiled DNA (PubMed:27060564). Displays DNA-supercoiling activity only when associated with the viral histone-like protein (PubMed:28381576).</text>
</comment>
<comment type="catalytic activity">
    <reaction evidence="4">
        <text>ATP-dependent breakage, passage and rejoining of double-stranded DNA.</text>
        <dbReference type="EC" id="5.6.2.2"/>
    </reaction>
</comment>
<comment type="cofactor">
    <cofactor evidence="2">
        <name>Mg(2+)</name>
        <dbReference type="ChEBI" id="CHEBI:18420"/>
    </cofactor>
    <cofactor evidence="2">
        <name>Mn(2+)</name>
        <dbReference type="ChEBI" id="CHEBI:29035"/>
    </cofactor>
    <cofactor evidence="2">
        <name>Ca(2+)</name>
        <dbReference type="ChEBI" id="CHEBI:29108"/>
    </cofactor>
    <text evidence="2">Binds two Mg(2+) per subunit. The magnesium ions form salt bridges with both the protein and the DNA. Can also accept other divalent metal cations, such as Mn(2+) or Ca(2+).</text>
</comment>
<comment type="subcellular location">
    <subcellularLocation>
        <location evidence="4">Host cytoplasm</location>
    </subcellularLocation>
    <text evidence="8">Localizes throughout the cytoplasmic viral factories at 16 hpi.</text>
</comment>
<comment type="induction">
    <text evidence="7 11 12">Expressed in the early phase of the viral replicative cycle (PubMed:32075923). It is transcribed early, under the control of an early promoter, but its transcript levels are maintained and still present during late infection (Probable).</text>
</comment>
<comment type="similarity">
    <text evidence="10">Belongs to the type II topoisomerase family.</text>
</comment>
<organism>
    <name type="scientific">African swine fever virus (strain Badajoz 1971 Vero-adapted)</name>
    <name type="common">Ba71V</name>
    <name type="synonym">ASFV</name>
    <dbReference type="NCBI Taxonomy" id="10498"/>
    <lineage>
        <taxon>Viruses</taxon>
        <taxon>Varidnaviria</taxon>
        <taxon>Bamfordvirae</taxon>
        <taxon>Nucleocytoviricota</taxon>
        <taxon>Pokkesviricetes</taxon>
        <taxon>Asfuvirales</taxon>
        <taxon>Asfarviridae</taxon>
        <taxon>Asfivirus</taxon>
        <taxon>African swine fever virus</taxon>
    </lineage>
</organism>
<name>TOP2_ASFB7</name>
<reference key="1">
    <citation type="journal article" date="1992" name="Virology">
        <title>A gene homologous to topoisomerase II in African swine fever virus.</title>
        <authorList>
            <person name="Garcia-Beato R."/>
            <person name="Freije J.M.P."/>
            <person name="Lopez-Otin C."/>
            <person name="Blasco R."/>
            <person name="Vinuela E."/>
        </authorList>
    </citation>
    <scope>NUCLEOTIDE SEQUENCE [GENOMIC DNA]</scope>
    <scope>INDUCTION</scope>
</reference>
<reference key="2">
    <citation type="journal article" date="1995" name="Virology">
        <title>Analysis of the complete nucleotide sequence of African swine fever virus.</title>
        <authorList>
            <person name="Yanez R.J."/>
            <person name="Rodriguez J.M."/>
            <person name="Nogal M.L."/>
            <person name="Yuste L."/>
            <person name="Enriquez C."/>
            <person name="Rodriguez J.F."/>
            <person name="Vinuela E."/>
        </authorList>
    </citation>
    <scope>NUCLEOTIDE SEQUENCE [LARGE SCALE GENOMIC DNA]</scope>
</reference>
<reference key="3">
    <citation type="journal article" date="2013" name="Virus Res.">
        <title>African swine fever virus transcription.</title>
        <authorList>
            <person name="Rodriguez J.M."/>
            <person name="Salas M.L."/>
        </authorList>
    </citation>
    <scope>REVIEW</scope>
</reference>
<reference key="4">
    <citation type="journal article" date="2015" name="Virology">
        <title>African swine fever virus ORF P1192R codes for a functional type II DNA topoisomerase.</title>
        <authorList>
            <person name="Coelho J."/>
            <person name="Martins C."/>
            <person name="Ferreira F."/>
            <person name="Leitao A."/>
        </authorList>
    </citation>
    <scope>FUNCTION</scope>
    <scope>SUBCELLULAR LOCATION</scope>
    <scope>CATALYTIC ACTIVITY</scope>
    <scope>MUTAGENESIS OF TYR-800</scope>
</reference>
<reference key="5">
    <citation type="journal article" date="2016" name="Virology">
        <title>Functional characterization and inhibition of the type II DNA topoisomerase coded by African swine fever virus.</title>
        <authorList>
            <person name="Coelho J."/>
            <person name="Ferreira F."/>
            <person name="Martins C."/>
            <person name="Leitao A."/>
        </authorList>
    </citation>
    <scope>FUNCTION</scope>
</reference>
<reference key="6">
    <citation type="journal article" date="2017" name="J. Virol.">
        <title>DNA-Binding properties of African swine fever virus pA104R, a histone-Like protein involved in viral replication and transcription.</title>
        <authorList>
            <person name="Frouco G."/>
            <person name="Freitas F.B."/>
            <person name="Coelho J."/>
            <person name="Leitao A."/>
            <person name="Martins C."/>
            <person name="Ferreira F."/>
        </authorList>
    </citation>
    <scope>FUNCTION</scope>
</reference>
<reference key="7">
    <citation type="journal article" date="2020" name="J. Virol.">
        <title>The African Swine Fever Virus Transcriptome.</title>
        <authorList>
            <person name="Cackett G."/>
            <person name="Matelska D."/>
            <person name="Sykora M."/>
            <person name="Portugal R."/>
            <person name="Malecki M."/>
            <person name="Baehler J."/>
            <person name="Dixon L."/>
            <person name="Werner F."/>
        </authorList>
    </citation>
    <scope>INDUCTION</scope>
</reference>
<reference key="8">
    <citation type="journal article" date="2021" name="Viruses">
        <title>Unpicking the Secrets of African Swine Fever Viral Replication Sites.</title>
        <authorList>
            <person name="Aicher S.M."/>
            <person name="Monaghan P."/>
            <person name="Netherton C.L."/>
            <person name="Hawes P.C."/>
        </authorList>
    </citation>
    <scope>SUBCELLULAR LOCATION</scope>
</reference>
<dbReference type="EC" id="5.6.2.2" evidence="4"/>
<dbReference type="EMBL" id="M88699">
    <property type="protein sequence ID" value="AAA42735.1"/>
    <property type="molecule type" value="Genomic_DNA"/>
</dbReference>
<dbReference type="EMBL" id="U18466">
    <property type="protein sequence ID" value="AAA65341.1"/>
    <property type="molecule type" value="Genomic_DNA"/>
</dbReference>
<dbReference type="PIR" id="B42549">
    <property type="entry name" value="ISXFAS"/>
</dbReference>
<dbReference type="RefSeq" id="NP_042805.1">
    <property type="nucleotide sequence ID" value="NC_001659.2"/>
</dbReference>
<dbReference type="PDB" id="8J87">
    <property type="method" value="EM"/>
    <property type="resolution" value="3.42 A"/>
    <property type="chains" value="A/B=1-1192"/>
</dbReference>
<dbReference type="PDB" id="8J88">
    <property type="method" value="EM"/>
    <property type="resolution" value="3.49 A"/>
    <property type="chains" value="A/B=1-1192"/>
</dbReference>
<dbReference type="PDB" id="8J89">
    <property type="method" value="EM"/>
    <property type="resolution" value="2.31 A"/>
    <property type="chains" value="A/B=1-1192"/>
</dbReference>
<dbReference type="PDB" id="8J8A">
    <property type="method" value="EM"/>
    <property type="resolution" value="2.51 A"/>
    <property type="chains" value="A/B=1-1192"/>
</dbReference>
<dbReference type="PDB" id="8J8B">
    <property type="method" value="EM"/>
    <property type="resolution" value="2.43 A"/>
    <property type="chains" value="A/B=1-1192"/>
</dbReference>
<dbReference type="PDB" id="8J8C">
    <property type="method" value="EM"/>
    <property type="resolution" value="2.69 A"/>
    <property type="chains" value="A/B=1-1192"/>
</dbReference>
<dbReference type="PDB" id="8J9V">
    <property type="method" value="EM"/>
    <property type="resolution" value="2.71 A"/>
    <property type="chains" value="A/B=1-1192"/>
</dbReference>
<dbReference type="PDB" id="8J9W">
    <property type="method" value="EM"/>
    <property type="resolution" value="2.76 A"/>
    <property type="chains" value="A/B=1-1192"/>
</dbReference>
<dbReference type="PDB" id="8J9X">
    <property type="method" value="EM"/>
    <property type="resolution" value="3.00 A"/>
    <property type="chains" value="A/B=1-1192"/>
</dbReference>
<dbReference type="PDB" id="8JA1">
    <property type="method" value="X-ray"/>
    <property type="resolution" value="1.14 A"/>
    <property type="chains" value="A=1-408"/>
</dbReference>
<dbReference type="PDB" id="8JA2">
    <property type="method" value="X-ray"/>
    <property type="resolution" value="1.73 A"/>
    <property type="chains" value="A=1-408"/>
</dbReference>
<dbReference type="PDB" id="8XRF">
    <property type="method" value="X-ray"/>
    <property type="resolution" value="2.94 A"/>
    <property type="chains" value="A/B=409-1192"/>
</dbReference>
<dbReference type="PDB" id="8XRG">
    <property type="method" value="X-ray"/>
    <property type="resolution" value="1.61 A"/>
    <property type="chains" value="A=1-408"/>
</dbReference>
<dbReference type="PDB" id="8XRH">
    <property type="method" value="X-ray"/>
    <property type="resolution" value="1.25 A"/>
    <property type="chains" value="A=1-408"/>
</dbReference>
<dbReference type="PDB" id="8XRI">
    <property type="method" value="X-ray"/>
    <property type="resolution" value="2.92 A"/>
    <property type="chains" value="A/B=409-1192"/>
</dbReference>
<dbReference type="PDBsum" id="8J87"/>
<dbReference type="PDBsum" id="8J88"/>
<dbReference type="PDBsum" id="8J89"/>
<dbReference type="PDBsum" id="8J8A"/>
<dbReference type="PDBsum" id="8J8B"/>
<dbReference type="PDBsum" id="8J8C"/>
<dbReference type="PDBsum" id="8J9V"/>
<dbReference type="PDBsum" id="8J9W"/>
<dbReference type="PDBsum" id="8J9X"/>
<dbReference type="PDBsum" id="8JA1"/>
<dbReference type="PDBsum" id="8JA2"/>
<dbReference type="PDBsum" id="8XRF"/>
<dbReference type="PDBsum" id="8XRG"/>
<dbReference type="PDBsum" id="8XRH"/>
<dbReference type="PDBsum" id="8XRI"/>
<dbReference type="SMR" id="Q00942"/>
<dbReference type="GeneID" id="22220341"/>
<dbReference type="KEGG" id="vg:22220341"/>
<dbReference type="Proteomes" id="UP000000624">
    <property type="component" value="Segment"/>
</dbReference>
<dbReference type="GO" id="GO:0030430">
    <property type="term" value="C:host cell cytoplasm"/>
    <property type="evidence" value="ECO:0007669"/>
    <property type="project" value="UniProtKB-SubCell"/>
</dbReference>
<dbReference type="GO" id="GO:0005524">
    <property type="term" value="F:ATP binding"/>
    <property type="evidence" value="ECO:0007669"/>
    <property type="project" value="UniProtKB-KW"/>
</dbReference>
<dbReference type="GO" id="GO:0003677">
    <property type="term" value="F:DNA binding"/>
    <property type="evidence" value="ECO:0007669"/>
    <property type="project" value="UniProtKB-KW"/>
</dbReference>
<dbReference type="GO" id="GO:0003918">
    <property type="term" value="F:DNA topoisomerase type II (double strand cut, ATP-hydrolyzing) activity"/>
    <property type="evidence" value="ECO:0007669"/>
    <property type="project" value="UniProtKB-EC"/>
</dbReference>
<dbReference type="GO" id="GO:0046872">
    <property type="term" value="F:metal ion binding"/>
    <property type="evidence" value="ECO:0007669"/>
    <property type="project" value="UniProtKB-KW"/>
</dbReference>
<dbReference type="GO" id="GO:0006265">
    <property type="term" value="P:DNA topological change"/>
    <property type="evidence" value="ECO:0007669"/>
    <property type="project" value="InterPro"/>
</dbReference>
<dbReference type="GO" id="GO:0000819">
    <property type="term" value="P:sister chromatid segregation"/>
    <property type="evidence" value="ECO:0007669"/>
    <property type="project" value="TreeGrafter"/>
</dbReference>
<dbReference type="FunFam" id="3.40.50.670:FF:000001">
    <property type="entry name" value="DNA topoisomerase 2"/>
    <property type="match status" value="1"/>
</dbReference>
<dbReference type="Gene3D" id="3.30.1360.40">
    <property type="match status" value="1"/>
</dbReference>
<dbReference type="Gene3D" id="3.30.1490.30">
    <property type="match status" value="1"/>
</dbReference>
<dbReference type="Gene3D" id="3.30.230.10">
    <property type="match status" value="1"/>
</dbReference>
<dbReference type="Gene3D" id="3.40.50.670">
    <property type="match status" value="1"/>
</dbReference>
<dbReference type="Gene3D" id="3.30.565.10">
    <property type="entry name" value="Histidine kinase-like ATPase, C-terminal domain"/>
    <property type="match status" value="1"/>
</dbReference>
<dbReference type="Gene3D" id="3.90.199.10">
    <property type="entry name" value="Topoisomerase II, domain 5"/>
    <property type="match status" value="1"/>
</dbReference>
<dbReference type="Gene3D" id="1.10.268.10">
    <property type="entry name" value="Topoisomerase, domain 3"/>
    <property type="match status" value="1"/>
</dbReference>
<dbReference type="InterPro" id="IPR050634">
    <property type="entry name" value="DNA_Topoisomerase_II"/>
</dbReference>
<dbReference type="InterPro" id="IPR036890">
    <property type="entry name" value="HATPase_C_sf"/>
</dbReference>
<dbReference type="InterPro" id="IPR014721">
    <property type="entry name" value="Ribsml_uS5_D2-typ_fold_subgr"/>
</dbReference>
<dbReference type="InterPro" id="IPR001241">
    <property type="entry name" value="Topo_IIA"/>
</dbReference>
<dbReference type="InterPro" id="IPR013760">
    <property type="entry name" value="Topo_IIA-like_dom_sf"/>
</dbReference>
<dbReference type="InterPro" id="IPR013758">
    <property type="entry name" value="Topo_IIA_A/C_ab"/>
</dbReference>
<dbReference type="InterPro" id="IPR013757">
    <property type="entry name" value="Topo_IIA_A_a_sf"/>
</dbReference>
<dbReference type="InterPro" id="IPR013759">
    <property type="entry name" value="Topo_IIA_B_C"/>
</dbReference>
<dbReference type="InterPro" id="IPR002205">
    <property type="entry name" value="Topo_IIA_dom_A"/>
</dbReference>
<dbReference type="InterPro" id="IPR001154">
    <property type="entry name" value="TopoII_euk"/>
</dbReference>
<dbReference type="InterPro" id="IPR018522">
    <property type="entry name" value="TopoIIA_CS"/>
</dbReference>
<dbReference type="InterPro" id="IPR031660">
    <property type="entry name" value="TOPRIM_C"/>
</dbReference>
<dbReference type="PANTHER" id="PTHR10169:SF50">
    <property type="entry name" value="DNA TOPOISOMERASE 2"/>
    <property type="match status" value="1"/>
</dbReference>
<dbReference type="PANTHER" id="PTHR10169">
    <property type="entry name" value="DNA TOPOISOMERASE/GYRASE"/>
    <property type="match status" value="1"/>
</dbReference>
<dbReference type="Pfam" id="PF00521">
    <property type="entry name" value="DNA_topoisoIV"/>
    <property type="match status" value="1"/>
</dbReference>
<dbReference type="Pfam" id="PF16898">
    <property type="entry name" value="TOPRIM_C"/>
    <property type="match status" value="1"/>
</dbReference>
<dbReference type="PRINTS" id="PR01158">
    <property type="entry name" value="TOPISMRASEII"/>
</dbReference>
<dbReference type="PRINTS" id="PR00418">
    <property type="entry name" value="TPI2FAMILY"/>
</dbReference>
<dbReference type="SMART" id="SM00433">
    <property type="entry name" value="TOP2c"/>
    <property type="match status" value="1"/>
</dbReference>
<dbReference type="SMART" id="SM00434">
    <property type="entry name" value="TOP4c"/>
    <property type="match status" value="1"/>
</dbReference>
<dbReference type="SUPFAM" id="SSF55874">
    <property type="entry name" value="ATPase domain of HSP90 chaperone/DNA topoisomerase II/histidine kinase"/>
    <property type="match status" value="1"/>
</dbReference>
<dbReference type="SUPFAM" id="SSF56719">
    <property type="entry name" value="Type II DNA topoisomerase"/>
    <property type="match status" value="1"/>
</dbReference>
<dbReference type="PROSITE" id="PS52040">
    <property type="entry name" value="TOPO_IIA"/>
    <property type="match status" value="1"/>
</dbReference>
<dbReference type="PROSITE" id="PS00177">
    <property type="entry name" value="TOPOISOMERASE_II"/>
    <property type="match status" value="1"/>
</dbReference>
<gene>
    <name type="primary">TOP</name>
    <name type="ordered locus">Ba71V-112</name>
    <name type="ORF">P1192R</name>
</gene>
<evidence type="ECO:0000250" key="1"/>
<evidence type="ECO:0000250" key="2">
    <source>
        <dbReference type="UniProtKB" id="P11388"/>
    </source>
</evidence>
<evidence type="ECO:0000255" key="3">
    <source>
        <dbReference type="PROSITE-ProRule" id="PRU01384"/>
    </source>
</evidence>
<evidence type="ECO:0000269" key="4">
    <source>
    </source>
</evidence>
<evidence type="ECO:0000269" key="5">
    <source>
    </source>
</evidence>
<evidence type="ECO:0000269" key="6">
    <source>
    </source>
</evidence>
<evidence type="ECO:0000269" key="7">
    <source>
    </source>
</evidence>
<evidence type="ECO:0000269" key="8">
    <source>
    </source>
</evidence>
<evidence type="ECO:0000303" key="9">
    <source>
    </source>
</evidence>
<evidence type="ECO:0000305" key="10"/>
<evidence type="ECO:0000305" key="11">
    <source>
    </source>
</evidence>
<evidence type="ECO:0000305" key="12">
    <source>
    </source>
</evidence>
<evidence type="ECO:0007829" key="13">
    <source>
        <dbReference type="PDB" id="8J88"/>
    </source>
</evidence>
<evidence type="ECO:0007829" key="14">
    <source>
        <dbReference type="PDB" id="8J89"/>
    </source>
</evidence>
<evidence type="ECO:0007829" key="15">
    <source>
        <dbReference type="PDB" id="8J8A"/>
    </source>
</evidence>
<evidence type="ECO:0007829" key="16">
    <source>
        <dbReference type="PDB" id="8J8B"/>
    </source>
</evidence>
<evidence type="ECO:0007829" key="17">
    <source>
        <dbReference type="PDB" id="8J9V"/>
    </source>
</evidence>
<evidence type="ECO:0007829" key="18">
    <source>
        <dbReference type="PDB" id="8J9W"/>
    </source>
</evidence>
<evidence type="ECO:0007829" key="19">
    <source>
        <dbReference type="PDB" id="8JA1"/>
    </source>
</evidence>
<evidence type="ECO:0007829" key="20">
    <source>
        <dbReference type="PDB" id="8XRF"/>
    </source>
</evidence>
<evidence type="ECO:0007829" key="21">
    <source>
        <dbReference type="PDB" id="8XRH"/>
    </source>
</evidence>
<evidence type="ECO:0007829" key="22">
    <source>
        <dbReference type="PDB" id="8XRI"/>
    </source>
</evidence>
<accession>Q00942</accession>
<keyword id="KW-0002">3D-structure</keyword>
<keyword id="KW-0067">ATP-binding</keyword>
<keyword id="KW-0238">DNA-binding</keyword>
<keyword id="KW-0244">Early protein</keyword>
<keyword id="KW-1035">Host cytoplasm</keyword>
<keyword id="KW-0413">Isomerase</keyword>
<keyword id="KW-0460">Magnesium</keyword>
<keyword id="KW-0479">Metal-binding</keyword>
<keyword id="KW-0547">Nucleotide-binding</keyword>
<keyword id="KW-1185">Reference proteome</keyword>
<keyword id="KW-0799">Topoisomerase</keyword>
<feature type="chain" id="PRO_0000145388" description="DNA topoisomerase 2">
    <location>
        <begin position="1"/>
        <end position="1192"/>
    </location>
</feature>
<feature type="domain" description="Topo IIA-type catalytic" evidence="3">
    <location>
        <begin position="707"/>
        <end position="1174"/>
    </location>
</feature>
<feature type="active site" description="O-(5'-phospho-DNA)-tyrosine intermediate" evidence="3 9">
    <location>
        <position position="800"/>
    </location>
</feature>
<feature type="binding site" evidence="1">
    <location>
        <position position="64"/>
    </location>
    <ligand>
        <name>ATP</name>
        <dbReference type="ChEBI" id="CHEBI:30616"/>
    </ligand>
</feature>
<feature type="binding site" evidence="1">
    <location>
        <position position="95"/>
    </location>
    <ligand>
        <name>ATP</name>
        <dbReference type="ChEBI" id="CHEBI:30616"/>
    </ligand>
</feature>
<feature type="binding site" evidence="9">
    <location>
        <begin position="142"/>
        <end position="149"/>
    </location>
    <ligand>
        <name>ATP</name>
        <dbReference type="ChEBI" id="CHEBI:30616"/>
    </ligand>
</feature>
<feature type="binding site" evidence="2">
    <location>
        <position position="438"/>
    </location>
    <ligand>
        <name>Mg(2+)</name>
        <dbReference type="ChEBI" id="CHEBI:18420"/>
        <label>1</label>
        <note>catalytic</note>
    </ligand>
</feature>
<feature type="binding site" evidence="2">
    <location>
        <position position="539"/>
    </location>
    <ligand>
        <name>Mg(2+)</name>
        <dbReference type="ChEBI" id="CHEBI:18420"/>
        <label>1</label>
        <note>catalytic</note>
    </ligand>
</feature>
<feature type="binding site" evidence="2">
    <location>
        <position position="539"/>
    </location>
    <ligand>
        <name>Mg(2+)</name>
        <dbReference type="ChEBI" id="CHEBI:18420"/>
        <label>2</label>
    </ligand>
</feature>
<feature type="binding site" evidence="2">
    <location>
        <position position="541"/>
    </location>
    <ligand>
        <name>Mg(2+)</name>
        <dbReference type="ChEBI" id="CHEBI:18420"/>
        <label>2</label>
    </ligand>
</feature>
<feature type="site" description="Transition state stabilizer" evidence="1">
    <location>
        <position position="799"/>
    </location>
</feature>
<feature type="mutagenesis site" description="Complette loss of topoisomersae II activity." evidence="4">
    <original>Y</original>
    <variation>F</variation>
    <location>
        <position position="800"/>
    </location>
</feature>
<feature type="helix" evidence="19">
    <location>
        <begin position="9"/>
        <end position="15"/>
    </location>
</feature>
<feature type="turn" evidence="19">
    <location>
        <begin position="17"/>
        <end position="20"/>
    </location>
</feature>
<feature type="strand" evidence="19">
    <location>
        <begin position="32"/>
        <end position="35"/>
    </location>
</feature>
<feature type="strand" evidence="19">
    <location>
        <begin position="42"/>
        <end position="45"/>
    </location>
</feature>
<feature type="helix" evidence="19">
    <location>
        <begin position="52"/>
        <end position="67"/>
    </location>
</feature>
<feature type="strand" evidence="19">
    <location>
        <begin position="72"/>
        <end position="74"/>
    </location>
</feature>
<feature type="strand" evidence="21">
    <location>
        <begin position="75"/>
        <end position="77"/>
    </location>
</feature>
<feature type="strand" evidence="19">
    <location>
        <begin position="81"/>
        <end position="87"/>
    </location>
</feature>
<feature type="strand" evidence="19">
    <location>
        <begin position="90"/>
        <end position="95"/>
    </location>
</feature>
<feature type="helix" evidence="19">
    <location>
        <begin position="106"/>
        <end position="112"/>
    </location>
</feature>
<feature type="helix" evidence="19">
    <location>
        <begin position="118"/>
        <end position="124"/>
    </location>
</feature>
<feature type="helix" evidence="19">
    <location>
        <begin position="147"/>
        <end position="153"/>
    </location>
</feature>
<feature type="strand" evidence="19">
    <location>
        <begin position="155"/>
        <end position="174"/>
    </location>
</feature>
<feature type="turn" evidence="19">
    <location>
        <begin position="175"/>
        <end position="178"/>
    </location>
</feature>
<feature type="strand" evidence="19">
    <location>
        <begin position="184"/>
        <end position="187"/>
    </location>
</feature>
<feature type="strand" evidence="19">
    <location>
        <begin position="191"/>
        <end position="199"/>
    </location>
</feature>
<feature type="helix" evidence="19">
    <location>
        <begin position="202"/>
        <end position="204"/>
    </location>
</feature>
<feature type="helix" evidence="19">
    <location>
        <begin position="212"/>
        <end position="232"/>
    </location>
</feature>
<feature type="strand" evidence="19">
    <location>
        <begin position="238"/>
        <end position="241"/>
    </location>
</feature>
<feature type="helix" evidence="19">
    <location>
        <begin position="251"/>
        <end position="259"/>
    </location>
</feature>
<feature type="turn" evidence="19">
    <location>
        <begin position="260"/>
        <end position="262"/>
    </location>
</feature>
<feature type="strand" evidence="19">
    <location>
        <begin position="269"/>
        <end position="277"/>
    </location>
</feature>
<feature type="helix" evidence="19">
    <location>
        <begin position="280"/>
        <end position="282"/>
    </location>
</feature>
<feature type="strand" evidence="19">
    <location>
        <begin position="285"/>
        <end position="291"/>
    </location>
</feature>
<feature type="strand" evidence="19">
    <location>
        <begin position="299"/>
        <end position="304"/>
    </location>
</feature>
<feature type="strand" evidence="19">
    <location>
        <begin position="307"/>
        <end position="311"/>
    </location>
</feature>
<feature type="helix" evidence="19">
    <location>
        <begin position="313"/>
        <end position="331"/>
    </location>
</feature>
<feature type="turn" evidence="21">
    <location>
        <begin position="346"/>
        <end position="349"/>
    </location>
</feature>
<feature type="strand" evidence="19">
    <location>
        <begin position="350"/>
        <end position="356"/>
    </location>
</feature>
<feature type="strand" evidence="19">
    <location>
        <begin position="362"/>
        <end position="365"/>
    </location>
</feature>
<feature type="strand" evidence="19">
    <location>
        <begin position="370"/>
        <end position="372"/>
    </location>
</feature>
<feature type="helix" evidence="19">
    <location>
        <begin position="376"/>
        <end position="381"/>
    </location>
</feature>
<feature type="helix" evidence="19">
    <location>
        <begin position="386"/>
        <end position="400"/>
    </location>
</feature>
<feature type="turn" evidence="14">
    <location>
        <begin position="422"/>
        <end position="425"/>
    </location>
</feature>
<feature type="strand" evidence="18">
    <location>
        <begin position="426"/>
        <end position="428"/>
    </location>
</feature>
<feature type="helix" evidence="14">
    <location>
        <begin position="429"/>
        <end position="431"/>
    </location>
</feature>
<feature type="strand" evidence="14">
    <location>
        <begin position="433"/>
        <end position="439"/>
    </location>
</feature>
<feature type="helix" evidence="14">
    <location>
        <begin position="440"/>
        <end position="450"/>
    </location>
</feature>
<feature type="helix" evidence="14">
    <location>
        <begin position="453"/>
        <end position="455"/>
    </location>
</feature>
<feature type="strand" evidence="17">
    <location>
        <begin position="457"/>
        <end position="459"/>
    </location>
</feature>
<feature type="turn" evidence="22">
    <location>
        <begin position="462"/>
        <end position="464"/>
    </location>
</feature>
<feature type="strand" evidence="14">
    <location>
        <begin position="465"/>
        <end position="469"/>
    </location>
</feature>
<feature type="helix" evidence="17">
    <location>
        <begin position="477"/>
        <end position="479"/>
    </location>
</feature>
<feature type="strand" evidence="20">
    <location>
        <begin position="480"/>
        <end position="483"/>
    </location>
</feature>
<feature type="helix" evidence="17">
    <location>
        <begin position="486"/>
        <end position="488"/>
    </location>
</feature>
<feature type="strand" evidence="20">
    <location>
        <begin position="493"/>
        <end position="495"/>
    </location>
</feature>
<feature type="helix" evidence="16">
    <location>
        <begin position="497"/>
        <end position="500"/>
    </location>
</feature>
<feature type="helix" evidence="14">
    <location>
        <begin position="503"/>
        <end position="512"/>
    </location>
</feature>
<feature type="strand" evidence="15">
    <location>
        <begin position="516"/>
        <end position="518"/>
    </location>
</feature>
<feature type="helix" evidence="14">
    <location>
        <begin position="523"/>
        <end position="526"/>
    </location>
</feature>
<feature type="strand" evidence="14">
    <location>
        <begin position="529"/>
        <end position="537"/>
    </location>
</feature>
<feature type="strand" evidence="18">
    <location>
        <begin position="540"/>
        <end position="544"/>
    </location>
</feature>
<feature type="turn" evidence="14">
    <location>
        <begin position="545"/>
        <end position="547"/>
    </location>
</feature>
<feature type="helix" evidence="14">
    <location>
        <begin position="548"/>
        <end position="559"/>
    </location>
</feature>
<feature type="helix" evidence="14">
    <location>
        <begin position="561"/>
        <end position="565"/>
    </location>
</feature>
<feature type="strand" evidence="14">
    <location>
        <begin position="569"/>
        <end position="572"/>
    </location>
</feature>
<feature type="strand" evidence="14">
    <location>
        <begin position="576"/>
        <end position="581"/>
    </location>
</feature>
<feature type="strand" evidence="14">
    <location>
        <begin position="588"/>
        <end position="592"/>
    </location>
</feature>
<feature type="helix" evidence="14">
    <location>
        <begin position="593"/>
        <end position="601"/>
    </location>
</feature>
<feature type="strand" evidence="14">
    <location>
        <begin position="609"/>
        <end position="613"/>
    </location>
</feature>
<feature type="helix" evidence="14">
    <location>
        <begin position="617"/>
        <end position="619"/>
    </location>
</feature>
<feature type="helix" evidence="14">
    <location>
        <begin position="622"/>
        <end position="630"/>
    </location>
</feature>
<feature type="helix" evidence="14">
    <location>
        <begin position="633"/>
        <end position="635"/>
    </location>
</feature>
<feature type="strand" evidence="14">
    <location>
        <begin position="636"/>
        <end position="640"/>
    </location>
</feature>
<feature type="helix" evidence="14">
    <location>
        <begin position="645"/>
        <end position="652"/>
    </location>
</feature>
<feature type="strand" evidence="14">
    <location>
        <begin position="653"/>
        <end position="655"/>
    </location>
</feature>
<feature type="strand" evidence="14">
    <location>
        <begin position="657"/>
        <end position="659"/>
    </location>
</feature>
<feature type="helix" evidence="14">
    <location>
        <begin position="660"/>
        <end position="663"/>
    </location>
</feature>
<feature type="strand" evidence="17">
    <location>
        <begin position="664"/>
        <end position="666"/>
    </location>
</feature>
<feature type="helix" evidence="14">
    <location>
        <begin position="673"/>
        <end position="681"/>
    </location>
</feature>
<feature type="strand" evidence="14">
    <location>
        <begin position="684"/>
        <end position="686"/>
    </location>
</feature>
<feature type="helix" evidence="14">
    <location>
        <begin position="687"/>
        <end position="704"/>
    </location>
</feature>
<feature type="turn" evidence="14">
    <location>
        <begin position="710"/>
        <end position="712"/>
    </location>
</feature>
<feature type="helix" evidence="14">
    <location>
        <begin position="716"/>
        <end position="728"/>
    </location>
</feature>
<feature type="helix" evidence="14">
    <location>
        <begin position="738"/>
        <end position="748"/>
    </location>
</feature>
<feature type="helix" evidence="14">
    <location>
        <begin position="755"/>
        <end position="764"/>
    </location>
</feature>
<feature type="strand" evidence="14">
    <location>
        <begin position="778"/>
        <end position="783"/>
    </location>
</feature>
<feature type="turn" evidence="14">
    <location>
        <begin position="788"/>
        <end position="794"/>
    </location>
</feature>
<feature type="turn" evidence="14">
    <location>
        <begin position="798"/>
        <end position="800"/>
    </location>
</feature>
<feature type="strand" evidence="14">
    <location>
        <begin position="802"/>
        <end position="805"/>
    </location>
</feature>
<feature type="helix" evidence="14">
    <location>
        <begin position="807"/>
        <end position="813"/>
    </location>
</feature>
<feature type="strand" evidence="16">
    <location>
        <begin position="816"/>
        <end position="818"/>
    </location>
</feature>
<feature type="strand" evidence="14">
    <location>
        <begin position="819"/>
        <end position="822"/>
    </location>
</feature>
<feature type="strand" evidence="14">
    <location>
        <begin position="824"/>
        <end position="827"/>
    </location>
</feature>
<feature type="strand" evidence="14">
    <location>
        <begin position="830"/>
        <end position="835"/>
    </location>
</feature>
<feature type="helix" evidence="14">
    <location>
        <begin position="843"/>
        <end position="846"/>
    </location>
</feature>
<feature type="strand" evidence="18">
    <location>
        <begin position="850"/>
        <end position="852"/>
    </location>
</feature>
<feature type="strand" evidence="16">
    <location>
        <begin position="853"/>
        <end position="856"/>
    </location>
</feature>
<feature type="strand" evidence="18">
    <location>
        <begin position="857"/>
        <end position="859"/>
    </location>
</feature>
<feature type="helix" evidence="14">
    <location>
        <begin position="865"/>
        <end position="876"/>
    </location>
</feature>
<feature type="strand" evidence="15">
    <location>
        <begin position="878"/>
        <end position="880"/>
    </location>
</feature>
<feature type="helix" evidence="14">
    <location>
        <begin position="883"/>
        <end position="890"/>
    </location>
</feature>
<feature type="turn" evidence="14">
    <location>
        <begin position="891"/>
        <end position="893"/>
    </location>
</feature>
<feature type="strand" evidence="14">
    <location>
        <begin position="908"/>
        <end position="913"/>
    </location>
</feature>
<feature type="strand" evidence="14">
    <location>
        <begin position="916"/>
        <end position="920"/>
    </location>
</feature>
<feature type="strand" evidence="14">
    <location>
        <begin position="922"/>
        <end position="926"/>
    </location>
</feature>
<feature type="turn" evidence="14">
    <location>
        <begin position="927"/>
        <end position="930"/>
    </location>
</feature>
<feature type="strand" evidence="14">
    <location>
        <begin position="931"/>
        <end position="936"/>
    </location>
</feature>
<feature type="strand" evidence="18">
    <location>
        <begin position="939"/>
        <end position="941"/>
    </location>
</feature>
<feature type="helix" evidence="14">
    <location>
        <begin position="943"/>
        <end position="951"/>
    </location>
</feature>
<feature type="helix" evidence="14">
    <location>
        <begin position="954"/>
        <end position="957"/>
    </location>
</feature>
<feature type="strand" evidence="14">
    <location>
        <begin position="959"/>
        <end position="965"/>
    </location>
</feature>
<feature type="strand" evidence="22">
    <location>
        <begin position="969"/>
        <end position="971"/>
    </location>
</feature>
<feature type="strand" evidence="14">
    <location>
        <begin position="974"/>
        <end position="978"/>
    </location>
</feature>
<feature type="helix" evidence="13">
    <location>
        <begin position="980"/>
        <end position="982"/>
    </location>
</feature>
<feature type="helix" evidence="14">
    <location>
        <begin position="983"/>
        <end position="990"/>
    </location>
</feature>
<feature type="strand" evidence="14">
    <location>
        <begin position="994"/>
        <end position="996"/>
    </location>
</feature>
<feature type="helix" evidence="14">
    <location>
        <begin position="998"/>
        <end position="1002"/>
    </location>
</feature>
<feature type="strand" evidence="14">
    <location>
        <begin position="1006"/>
        <end position="1008"/>
    </location>
</feature>
<feature type="strand" evidence="14">
    <location>
        <begin position="1012"/>
        <end position="1016"/>
    </location>
</feature>
<feature type="strand" evidence="14">
    <location>
        <begin position="1020"/>
        <end position="1027"/>
    </location>
</feature>
<feature type="helix" evidence="14">
    <location>
        <begin position="1028"/>
        <end position="1070"/>
    </location>
</feature>
<feature type="turn" evidence="14">
    <location>
        <begin position="1071"/>
        <end position="1073"/>
    </location>
</feature>
<feature type="helix" evidence="14">
    <location>
        <begin position="1076"/>
        <end position="1078"/>
    </location>
</feature>
<feature type="strand" evidence="14">
    <location>
        <begin position="1079"/>
        <end position="1081"/>
    </location>
</feature>
<feature type="helix" evidence="14">
    <location>
        <begin position="1082"/>
        <end position="1091"/>
    </location>
</feature>
<feature type="helix" evidence="14">
    <location>
        <begin position="1099"/>
        <end position="1103"/>
    </location>
</feature>
<feature type="helix" evidence="14">
    <location>
        <begin position="1110"/>
        <end position="1117"/>
    </location>
</feature>
<feature type="helix" evidence="14">
    <location>
        <begin position="1123"/>
        <end position="1126"/>
    </location>
</feature>
<feature type="strand" evidence="18">
    <location>
        <begin position="1127"/>
        <end position="1129"/>
    </location>
</feature>
<feature type="helix" evidence="14">
    <location>
        <begin position="1130"/>
        <end position="1133"/>
    </location>
</feature>
<feature type="helix" evidence="14">
    <location>
        <begin position="1135"/>
        <end position="1159"/>
    </location>
</feature>
<feature type="strand" evidence="14">
    <location>
        <begin position="1162"/>
        <end position="1164"/>
    </location>
</feature>
<feature type="helix" evidence="14">
    <location>
        <begin position="1167"/>
        <end position="1186"/>
    </location>
</feature>
<feature type="turn" evidence="18">
    <location>
        <begin position="1187"/>
        <end position="1189"/>
    </location>
</feature>
<protein>
    <recommendedName>
        <fullName evidence="9">DNA topoisomerase 2</fullName>
        <ecNumber evidence="4">5.6.2.2</ecNumber>
    </recommendedName>
    <alternativeName>
        <fullName>DNA topoisomerase II</fullName>
    </alternativeName>
</protein>
<sequence>MEAFEISDFKEHAKKKSMWAGALNKVTISGLMGVFTEDEDLMALPIHRDHCPALLKIFDELIVNATDHERACHSKTKKVTYIKISFDKGVFSCENDGPGIPIAKHEQASLIAKRDVYVPEVASCFFLAGTNINKAKDCIKGGTNGVGLKLAMVHSQWAILTTADGAQKYVQQINQRLDIIEPPTITPSREMFTRIELMPVYQELGYAEPLSETEQADLSAWIYLRACQCAAYVGKGTTIYYNDKPCRTGSVMALAKMYTLLSAPNSTIHTATIKADAKPYSLHPLQVAAVVSPKFKKFEHVSIINGVNCVKGEHVTFLKKTINEMVIKKFQQTIKDKNRKTTLRDSCSNIFVVIVGSIPGIEWTGQRKDELSIAENVFKTHYSIPSSFLTSMTRSIVDILLQSISKKDNHKQVDVDKYTRARNAGGKRAQDCMLLAAEGDSALSLLRTGLTLGKSNPSGPSFDFCGMISLGGVIMNACKKVTNITTDSGETIMVRNEQLTNNKVLQGIVQVLGLDFNCHYKTQEERAKLRYGCIVACVDQDLDGCGKILGLLLAYFHLFWPQLIIHGFVKRLLTPLIRVYEKGKTMPVEFYYEQEFDAWAKKQTSLVNHTVKYYKGLAAHDTHEVKSMFKHFDNMVYTFTLDDSAKELFHIYFGGESELRKRELCTGVVPLTETQTQSIHSVRRIPCSLHLQVDTKAYKLDAIERQIPNFLDGMTRARRKILAGGVKCFASNNRERKVFQFGGYVADHMFYHHGDMSLNTSIIKAAQYYPGSSHLYPVFIGIGSFGSRHLGGKDAGSPRYISVQLASEFIKTMFPAEDSWLLPYVFEDGQRAEPEYYVPVLPLAIMEYGANPSEGWKYTTWARQLEDILALVRAYVDKDNPKHELLHYAIKHKITILPLRPSNYNFKGHLKRFGQYYYSYGTYDISEQRNIITITELPLRVPTVAYIESIKKSSNRMTFIEEIIDYSSSETIEILVKLKPNSLNRIVEEFKETEEQDSIENFLRLRNCLHSHLNFVKPKGGIIEFNSYYEILYAWLPYRRELYQKRLMREHAVLKLRIIMETAIVRYINESAELNLSHYEDEKEASRILSEHGFPPLNHTLIISPEFASIEELNQKALQGCYTYILSLQARELLIAAKTRRVEKIKKMQARLDKVEQLLQESPFPGASVWLEEIDAVEKAIIKGRNTQWKFH</sequence>
<proteinExistence type="evidence at protein level"/>
<organismHost>
    <name type="scientific">Ornithodoros</name>
    <name type="common">relapsing fever ticks</name>
    <dbReference type="NCBI Taxonomy" id="6937"/>
</organismHost>
<organismHost>
    <name type="scientific">Sus scrofa</name>
    <name type="common">Pig</name>
    <dbReference type="NCBI Taxonomy" id="9823"/>
</organismHost>